<protein>
    <recommendedName>
        <fullName>Protein crumbs homolog 3</fullName>
    </recommendedName>
</protein>
<accession>Q9BUF7</accession>
<accession>A8KA91</accession>
<accession>D6W643</accession>
<accession>Q8N0V8</accession>
<accession>Q8WVA0</accession>
<dbReference type="EMBL" id="AY103469">
    <property type="protein sequence ID" value="AAM44074.1"/>
    <property type="molecule type" value="mRNA"/>
</dbReference>
<dbReference type="EMBL" id="AF503290">
    <property type="protein sequence ID" value="AAM23013.1"/>
    <property type="molecule type" value="mRNA"/>
</dbReference>
<dbReference type="EMBL" id="AY358684">
    <property type="protein sequence ID" value="AAQ89047.1"/>
    <property type="molecule type" value="mRNA"/>
</dbReference>
<dbReference type="EMBL" id="AK292956">
    <property type="protein sequence ID" value="BAF85645.1"/>
    <property type="molecule type" value="mRNA"/>
</dbReference>
<dbReference type="EMBL" id="CH471139">
    <property type="protein sequence ID" value="EAW69084.1"/>
    <property type="molecule type" value="Genomic_DNA"/>
</dbReference>
<dbReference type="EMBL" id="CH471139">
    <property type="protein sequence ID" value="EAW69085.1"/>
    <property type="molecule type" value="Genomic_DNA"/>
</dbReference>
<dbReference type="EMBL" id="CH471139">
    <property type="protein sequence ID" value="EAW69086.1"/>
    <property type="molecule type" value="Genomic_DNA"/>
</dbReference>
<dbReference type="EMBL" id="BC002652">
    <property type="protein sequence ID" value="AAH02652.2"/>
    <property type="molecule type" value="mRNA"/>
</dbReference>
<dbReference type="EMBL" id="BC018409">
    <property type="protein sequence ID" value="AAH18409.1"/>
    <property type="molecule type" value="mRNA"/>
</dbReference>
<dbReference type="CCDS" id="CCDS12166.1">
    <molecule id="Q9BUF7-2"/>
</dbReference>
<dbReference type="CCDS" id="CCDS12167.1">
    <molecule id="Q9BUF7-1"/>
</dbReference>
<dbReference type="RefSeq" id="NP_631900.1">
    <molecule id="Q9BUF7-1"/>
    <property type="nucleotide sequence ID" value="NM_139161.5"/>
</dbReference>
<dbReference type="RefSeq" id="NP_777377.1">
    <molecule id="Q9BUF7-2"/>
    <property type="nucleotide sequence ID" value="NM_174881.4"/>
</dbReference>
<dbReference type="RefSeq" id="NP_777378.1">
    <molecule id="Q9BUF7-1"/>
    <property type="nucleotide sequence ID" value="NM_174882.3"/>
</dbReference>
<dbReference type="RefSeq" id="XP_054178586.1">
    <molecule id="Q9BUF7-2"/>
    <property type="nucleotide sequence ID" value="XM_054322611.1"/>
</dbReference>
<dbReference type="PDB" id="5I7Z">
    <property type="method" value="X-ray"/>
    <property type="resolution" value="1.80 A"/>
    <property type="chains" value="B=113-120"/>
</dbReference>
<dbReference type="PDBsum" id="5I7Z"/>
<dbReference type="SMR" id="Q9BUF7"/>
<dbReference type="BioGRID" id="124940">
    <property type="interactions" value="28"/>
</dbReference>
<dbReference type="ComplexPortal" id="CPX-6166">
    <property type="entry name" value="CRUMBS3-PALS1-PATJ cell polarity complex"/>
</dbReference>
<dbReference type="FunCoup" id="Q9BUF7">
    <property type="interactions" value="200"/>
</dbReference>
<dbReference type="IntAct" id="Q9BUF7">
    <property type="interactions" value="27"/>
</dbReference>
<dbReference type="MINT" id="Q9BUF7"/>
<dbReference type="STRING" id="9606.ENSP00000349204"/>
<dbReference type="GlyCosmos" id="Q9BUF7">
    <property type="glycosylation" value="1 site, No reported glycans"/>
</dbReference>
<dbReference type="GlyGen" id="Q9BUF7">
    <property type="glycosylation" value="1 site"/>
</dbReference>
<dbReference type="iPTMnet" id="Q9BUF7"/>
<dbReference type="PhosphoSitePlus" id="Q9BUF7"/>
<dbReference type="BioMuta" id="CRB3"/>
<dbReference type="DMDM" id="67460584"/>
<dbReference type="jPOST" id="Q9BUF7"/>
<dbReference type="MassIVE" id="Q9BUF7"/>
<dbReference type="PaxDb" id="9606-ENSP00000349204"/>
<dbReference type="PeptideAtlas" id="Q9BUF7"/>
<dbReference type="ProteomicsDB" id="79082">
    <molecule id="Q9BUF7-1"/>
</dbReference>
<dbReference type="ProteomicsDB" id="79083">
    <molecule id="Q9BUF7-2"/>
</dbReference>
<dbReference type="Antibodypedia" id="3003">
    <property type="antibodies" value="92 antibodies from 15 providers"/>
</dbReference>
<dbReference type="DNASU" id="92359"/>
<dbReference type="Ensembl" id="ENST00000308243.7">
    <molecule id="Q9BUF7-1"/>
    <property type="protein sequence ID" value="ENSP00000310123.6"/>
    <property type="gene ID" value="ENSG00000130545.16"/>
</dbReference>
<dbReference type="Ensembl" id="ENST00000356762.7">
    <molecule id="Q9BUF7-2"/>
    <property type="protein sequence ID" value="ENSP00000349204.2"/>
    <property type="gene ID" value="ENSG00000130545.16"/>
</dbReference>
<dbReference type="Ensembl" id="ENST00000598494.5">
    <molecule id="Q9BUF7-1"/>
    <property type="protein sequence ID" value="ENSP00000469707.1"/>
    <property type="gene ID" value="ENSG00000130545.16"/>
</dbReference>
<dbReference type="Ensembl" id="ENST00000600229.6">
    <molecule id="Q9BUF7-1"/>
    <property type="protein sequence ID" value="ENSP00000472010.1"/>
    <property type="gene ID" value="ENSG00000130545.16"/>
</dbReference>
<dbReference type="GeneID" id="92359"/>
<dbReference type="KEGG" id="hsa:92359"/>
<dbReference type="MANE-Select" id="ENST00000600229.6">
    <property type="protein sequence ID" value="ENSP00000472010.1"/>
    <property type="RefSeq nucleotide sequence ID" value="NM_139161.5"/>
    <property type="RefSeq protein sequence ID" value="NP_631900.1"/>
</dbReference>
<dbReference type="UCSC" id="uc002mey.4">
    <molecule id="Q9BUF7-1"/>
    <property type="organism name" value="human"/>
</dbReference>
<dbReference type="AGR" id="HGNC:20237"/>
<dbReference type="CTD" id="92359"/>
<dbReference type="DisGeNET" id="92359"/>
<dbReference type="GeneCards" id="CRB3"/>
<dbReference type="HGNC" id="HGNC:20237">
    <property type="gene designation" value="CRB3"/>
</dbReference>
<dbReference type="HPA" id="ENSG00000130545">
    <property type="expression patterns" value="Tissue enhanced (esophagus)"/>
</dbReference>
<dbReference type="MIM" id="609737">
    <property type="type" value="gene"/>
</dbReference>
<dbReference type="neXtProt" id="NX_Q9BUF7"/>
<dbReference type="OpenTargets" id="ENSG00000130545"/>
<dbReference type="PharmGKB" id="PA134862130"/>
<dbReference type="VEuPathDB" id="HostDB:ENSG00000130545"/>
<dbReference type="eggNOG" id="ENOG502S74B">
    <property type="taxonomic scope" value="Eukaryota"/>
</dbReference>
<dbReference type="GeneTree" id="ENSGT00950000183101"/>
<dbReference type="HOGENOM" id="CLU_2120342_0_0_1"/>
<dbReference type="InParanoid" id="Q9BUF7"/>
<dbReference type="OMA" id="EEQFNHA"/>
<dbReference type="OrthoDB" id="9949034at2759"/>
<dbReference type="PAN-GO" id="Q9BUF7">
    <property type="GO annotations" value="1 GO annotation based on evolutionary models"/>
</dbReference>
<dbReference type="PhylomeDB" id="Q9BUF7"/>
<dbReference type="TreeFam" id="TF353183"/>
<dbReference type="PathwayCommons" id="Q9BUF7"/>
<dbReference type="Reactome" id="R-HSA-420029">
    <property type="pathway name" value="Tight junction interactions"/>
</dbReference>
<dbReference type="Reactome" id="R-HSA-9705677">
    <property type="pathway name" value="SARS-CoV-2 targets PDZ proteins in cell-cell junction"/>
</dbReference>
<dbReference type="SignaLink" id="Q9BUF7"/>
<dbReference type="SIGNOR" id="Q9BUF7"/>
<dbReference type="BioGRID-ORCS" id="92359">
    <property type="hits" value="15 hits in 1143 CRISPR screens"/>
</dbReference>
<dbReference type="CD-CODE" id="8C2F96ED">
    <property type="entry name" value="Centrosome"/>
</dbReference>
<dbReference type="ChiTaRS" id="CRB3">
    <property type="organism name" value="human"/>
</dbReference>
<dbReference type="EvolutionaryTrace" id="Q9BUF7"/>
<dbReference type="GeneWiki" id="CRB3"/>
<dbReference type="GenomeRNAi" id="92359"/>
<dbReference type="Pharos" id="Q9BUF7">
    <property type="development level" value="Tbio"/>
</dbReference>
<dbReference type="PRO" id="PR:Q9BUF7"/>
<dbReference type="Proteomes" id="UP000005640">
    <property type="component" value="Chromosome 19"/>
</dbReference>
<dbReference type="RNAct" id="Q9BUF7">
    <property type="molecule type" value="protein"/>
</dbReference>
<dbReference type="Bgee" id="ENSG00000130545">
    <property type="expression patterns" value="Expressed in lower esophagus mucosa and 152 other cell types or tissues"/>
</dbReference>
<dbReference type="GO" id="GO:0043296">
    <property type="term" value="C:apical junction complex"/>
    <property type="evidence" value="ECO:0000303"/>
    <property type="project" value="ComplexPortal"/>
</dbReference>
<dbReference type="GO" id="GO:0016324">
    <property type="term" value="C:apical plasma membrane"/>
    <property type="evidence" value="ECO:0000303"/>
    <property type="project" value="ComplexPortal"/>
</dbReference>
<dbReference type="GO" id="GO:0005923">
    <property type="term" value="C:bicellular tight junction"/>
    <property type="evidence" value="ECO:0007669"/>
    <property type="project" value="UniProtKB-SubCell"/>
</dbReference>
<dbReference type="GO" id="GO:0030054">
    <property type="term" value="C:cell junction"/>
    <property type="evidence" value="ECO:0000314"/>
    <property type="project" value="HPA"/>
</dbReference>
<dbReference type="GO" id="GO:0070062">
    <property type="term" value="C:extracellular exosome"/>
    <property type="evidence" value="ECO:0007005"/>
    <property type="project" value="UniProtKB"/>
</dbReference>
<dbReference type="GO" id="GO:0005886">
    <property type="term" value="C:plasma membrane"/>
    <property type="evidence" value="ECO:0000304"/>
    <property type="project" value="Reactome"/>
</dbReference>
<dbReference type="GO" id="GO:0035003">
    <property type="term" value="C:subapical complex"/>
    <property type="evidence" value="ECO:0007669"/>
    <property type="project" value="Ensembl"/>
</dbReference>
<dbReference type="GO" id="GO:0019904">
    <property type="term" value="F:protein domain specific binding"/>
    <property type="evidence" value="ECO:0000353"/>
    <property type="project" value="BHF-UCL"/>
</dbReference>
<dbReference type="GO" id="GO:0017124">
    <property type="term" value="F:SH3 domain binding"/>
    <property type="evidence" value="ECO:0000353"/>
    <property type="project" value="BHF-UCL"/>
</dbReference>
<dbReference type="GO" id="GO:0045197">
    <property type="term" value="P:establishment or maintenance of epithelial cell apical/basal polarity"/>
    <property type="evidence" value="ECO:0000303"/>
    <property type="project" value="ComplexPortal"/>
</dbReference>
<dbReference type="GO" id="GO:1901890">
    <property type="term" value="P:positive regulation of cell junction assembly"/>
    <property type="evidence" value="ECO:0000250"/>
    <property type="project" value="UniProtKB"/>
</dbReference>
<dbReference type="GO" id="GO:0072659">
    <property type="term" value="P:protein localization to plasma membrane"/>
    <property type="evidence" value="ECO:0000314"/>
    <property type="project" value="BHF-UCL"/>
</dbReference>
<evidence type="ECO:0000250" key="1">
    <source>
        <dbReference type="UniProtKB" id="A0A5F4BST2"/>
    </source>
</evidence>
<evidence type="ECO:0000250" key="2">
    <source>
        <dbReference type="UniProtKB" id="Q8QZT4"/>
    </source>
</evidence>
<evidence type="ECO:0000255" key="3"/>
<evidence type="ECO:0000256" key="4">
    <source>
        <dbReference type="SAM" id="MobiDB-lite"/>
    </source>
</evidence>
<evidence type="ECO:0000269" key="5">
    <source>
    </source>
</evidence>
<evidence type="ECO:0000269" key="6">
    <source>
    </source>
</evidence>
<evidence type="ECO:0000269" key="7">
    <source>
    </source>
</evidence>
<evidence type="ECO:0000269" key="8">
    <source>
    </source>
</evidence>
<evidence type="ECO:0000269" key="9">
    <source>
    </source>
</evidence>
<evidence type="ECO:0000303" key="10">
    <source>
    </source>
</evidence>
<evidence type="ECO:0000303" key="11">
    <source>
    </source>
</evidence>
<evidence type="ECO:0000312" key="12">
    <source>
        <dbReference type="HGNC" id="HGNC:20237"/>
    </source>
</evidence>
<evidence type="ECO:0007829" key="13">
    <source>
        <dbReference type="PDB" id="5I7Z"/>
    </source>
</evidence>
<sequence length="120" mass="12854">MANPGLGLLLALGLPFLLARWGRAWGQIQTTSANENSTVLPSSTSSSSDGNLRPEAITAIIVVFSLLAALLLAVGLALLVRKLREKRQTEGTYRPSSEEQVGARVPPTPNLKLPPEERLI</sequence>
<keyword id="KW-0002">3D-structure</keyword>
<keyword id="KW-0025">Alternative splicing</keyword>
<keyword id="KW-0965">Cell junction</keyword>
<keyword id="KW-1003">Cell membrane</keyword>
<keyword id="KW-0325">Glycoprotein</keyword>
<keyword id="KW-0472">Membrane</keyword>
<keyword id="KW-1267">Proteomics identification</keyword>
<keyword id="KW-1185">Reference proteome</keyword>
<keyword id="KW-0732">Signal</keyword>
<keyword id="KW-0796">Tight junction</keyword>
<keyword id="KW-0812">Transmembrane</keyword>
<keyword id="KW-1133">Transmembrane helix</keyword>
<feature type="signal peptide" evidence="3">
    <location>
        <begin position="1"/>
        <end position="26"/>
    </location>
</feature>
<feature type="chain" id="PRO_0000021005" description="Protein crumbs homolog 3">
    <location>
        <begin position="27"/>
        <end position="120"/>
    </location>
</feature>
<feature type="topological domain" description="Extracellular" evidence="3">
    <location>
        <begin position="27"/>
        <end position="59"/>
    </location>
</feature>
<feature type="transmembrane region" description="Helical" evidence="3">
    <location>
        <begin position="60"/>
        <end position="80"/>
    </location>
</feature>
<feature type="topological domain" description="Cytoplasmic" evidence="3">
    <location>
        <begin position="81"/>
        <end position="120"/>
    </location>
</feature>
<feature type="region of interest" description="Interaction with EPB41L5" evidence="8">
    <location>
        <begin position="84"/>
        <end position="120"/>
    </location>
</feature>
<feature type="region of interest" description="Disordered" evidence="4">
    <location>
        <begin position="87"/>
        <end position="120"/>
    </location>
</feature>
<feature type="short sequence motif" description="PDZ-binding">
    <location>
        <begin position="117"/>
        <end position="120"/>
    </location>
</feature>
<feature type="compositionally biased region" description="Polar residues" evidence="4">
    <location>
        <begin position="90"/>
        <end position="99"/>
    </location>
</feature>
<feature type="glycosylation site" description="N-linked (GlcNAc...) asparagine" evidence="5">
    <location>
        <position position="36"/>
    </location>
</feature>
<feature type="splice variant" id="VSP_013989" description="In isoform 2." evidence="10 11">
    <original>VGARVPPTPNLKLPPEERLI</original>
    <variation>FSHAAEARAPQDSKETVQGCLPI</variation>
    <location>
        <begin position="101"/>
        <end position="120"/>
    </location>
</feature>
<feature type="mutagenesis site" description="Abolishes N-glycosylation. No effect on localization to the apical cell membrane." evidence="5">
    <original>N</original>
    <variation>D</variation>
    <location>
        <position position="36"/>
    </location>
</feature>
<feature type="mutagenesis site" description="Loss of interaction with PARD6A and PALS1. No effect on interaction with EPB41L5." evidence="6 7 8">
    <location>
        <begin position="117"/>
        <end position="120"/>
    </location>
</feature>
<feature type="strand" evidence="13">
    <location>
        <begin position="116"/>
        <end position="120"/>
    </location>
</feature>
<name>CRUM3_HUMAN</name>
<reference key="1">
    <citation type="journal article" date="2003" name="Gene">
        <title>Mammalian Crumbs3 is a small transmembrane protein linked to protein associated with Lin-7 (Pals1).</title>
        <authorList>
            <person name="Makarova O."/>
            <person name="Roh M.H."/>
            <person name="Liu C.-J."/>
            <person name="Laurinec S."/>
            <person name="Margolis B."/>
        </authorList>
    </citation>
    <scope>NUCLEOTIDE SEQUENCE [MRNA] (ISOFORM 1)</scope>
    <scope>INTERACTION WITH PALS1</scope>
    <scope>SUBCELLULAR LOCATION</scope>
    <scope>TISSUE SPECIFICITY</scope>
    <scope>GLYCOSYLATION AT ASN-36</scope>
    <scope>MUTAGENESIS OF ASN-36</scope>
    <source>
        <tissue>Retina</tissue>
    </source>
</reference>
<reference key="2">
    <citation type="submission" date="2002-04" db="EMBL/GenBank/DDBJ databases">
        <authorList>
            <person name="Guo J.H."/>
            <person name="Yu L."/>
        </authorList>
    </citation>
    <scope>NUCLEOTIDE SEQUENCE [LARGE SCALE MRNA] (ISOFORM 1)</scope>
    <source>
        <tissue>Pancreas</tissue>
    </source>
</reference>
<reference key="3">
    <citation type="journal article" date="2003" name="Genome Res.">
        <title>The secreted protein discovery initiative (SPDI), a large-scale effort to identify novel human secreted and transmembrane proteins: a bioinformatics assessment.</title>
        <authorList>
            <person name="Clark H.F."/>
            <person name="Gurney A.L."/>
            <person name="Abaya E."/>
            <person name="Baker K."/>
            <person name="Baldwin D.T."/>
            <person name="Brush J."/>
            <person name="Chen J."/>
            <person name="Chow B."/>
            <person name="Chui C."/>
            <person name="Crowley C."/>
            <person name="Currell B."/>
            <person name="Deuel B."/>
            <person name="Dowd P."/>
            <person name="Eaton D."/>
            <person name="Foster J.S."/>
            <person name="Grimaldi C."/>
            <person name="Gu Q."/>
            <person name="Hass P.E."/>
            <person name="Heldens S."/>
            <person name="Huang A."/>
            <person name="Kim H.S."/>
            <person name="Klimowski L."/>
            <person name="Jin Y."/>
            <person name="Johnson S."/>
            <person name="Lee J."/>
            <person name="Lewis L."/>
            <person name="Liao D."/>
            <person name="Mark M.R."/>
            <person name="Robbie E."/>
            <person name="Sanchez C."/>
            <person name="Schoenfeld J."/>
            <person name="Seshagiri S."/>
            <person name="Simmons L."/>
            <person name="Singh J."/>
            <person name="Smith V."/>
            <person name="Stinson J."/>
            <person name="Vagts A."/>
            <person name="Vandlen R.L."/>
            <person name="Watanabe C."/>
            <person name="Wieand D."/>
            <person name="Woods K."/>
            <person name="Xie M.-H."/>
            <person name="Yansura D.G."/>
            <person name="Yi S."/>
            <person name="Yu G."/>
            <person name="Yuan J."/>
            <person name="Zhang M."/>
            <person name="Zhang Z."/>
            <person name="Goddard A.D."/>
            <person name="Wood W.I."/>
            <person name="Godowski P.J."/>
            <person name="Gray A.M."/>
        </authorList>
    </citation>
    <scope>NUCLEOTIDE SEQUENCE [LARGE SCALE MRNA] (ISOFORM 2)</scope>
</reference>
<reference key="4">
    <citation type="journal article" date="2004" name="Nat. Genet.">
        <title>Complete sequencing and characterization of 21,243 full-length human cDNAs.</title>
        <authorList>
            <person name="Ota T."/>
            <person name="Suzuki Y."/>
            <person name="Nishikawa T."/>
            <person name="Otsuki T."/>
            <person name="Sugiyama T."/>
            <person name="Irie R."/>
            <person name="Wakamatsu A."/>
            <person name="Hayashi K."/>
            <person name="Sato H."/>
            <person name="Nagai K."/>
            <person name="Kimura K."/>
            <person name="Makita H."/>
            <person name="Sekine M."/>
            <person name="Obayashi M."/>
            <person name="Nishi T."/>
            <person name="Shibahara T."/>
            <person name="Tanaka T."/>
            <person name="Ishii S."/>
            <person name="Yamamoto J."/>
            <person name="Saito K."/>
            <person name="Kawai Y."/>
            <person name="Isono Y."/>
            <person name="Nakamura Y."/>
            <person name="Nagahari K."/>
            <person name="Murakami K."/>
            <person name="Yasuda T."/>
            <person name="Iwayanagi T."/>
            <person name="Wagatsuma M."/>
            <person name="Shiratori A."/>
            <person name="Sudo H."/>
            <person name="Hosoiri T."/>
            <person name="Kaku Y."/>
            <person name="Kodaira H."/>
            <person name="Kondo H."/>
            <person name="Sugawara M."/>
            <person name="Takahashi M."/>
            <person name="Kanda K."/>
            <person name="Yokoi T."/>
            <person name="Furuya T."/>
            <person name="Kikkawa E."/>
            <person name="Omura Y."/>
            <person name="Abe K."/>
            <person name="Kamihara K."/>
            <person name="Katsuta N."/>
            <person name="Sato K."/>
            <person name="Tanikawa M."/>
            <person name="Yamazaki M."/>
            <person name="Ninomiya K."/>
            <person name="Ishibashi T."/>
            <person name="Yamashita H."/>
            <person name="Murakawa K."/>
            <person name="Fujimori K."/>
            <person name="Tanai H."/>
            <person name="Kimata M."/>
            <person name="Watanabe M."/>
            <person name="Hiraoka S."/>
            <person name="Chiba Y."/>
            <person name="Ishida S."/>
            <person name="Ono Y."/>
            <person name="Takiguchi S."/>
            <person name="Watanabe S."/>
            <person name="Yosida M."/>
            <person name="Hotuta T."/>
            <person name="Kusano J."/>
            <person name="Kanehori K."/>
            <person name="Takahashi-Fujii A."/>
            <person name="Hara H."/>
            <person name="Tanase T.-O."/>
            <person name="Nomura Y."/>
            <person name="Togiya S."/>
            <person name="Komai F."/>
            <person name="Hara R."/>
            <person name="Takeuchi K."/>
            <person name="Arita M."/>
            <person name="Imose N."/>
            <person name="Musashino K."/>
            <person name="Yuuki H."/>
            <person name="Oshima A."/>
            <person name="Sasaki N."/>
            <person name="Aotsuka S."/>
            <person name="Yoshikawa Y."/>
            <person name="Matsunawa H."/>
            <person name="Ichihara T."/>
            <person name="Shiohata N."/>
            <person name="Sano S."/>
            <person name="Moriya S."/>
            <person name="Momiyama H."/>
            <person name="Satoh N."/>
            <person name="Takami S."/>
            <person name="Terashima Y."/>
            <person name="Suzuki O."/>
            <person name="Nakagawa S."/>
            <person name="Senoh A."/>
            <person name="Mizoguchi H."/>
            <person name="Goto Y."/>
            <person name="Shimizu F."/>
            <person name="Wakebe H."/>
            <person name="Hishigaki H."/>
            <person name="Watanabe T."/>
            <person name="Sugiyama A."/>
            <person name="Takemoto M."/>
            <person name="Kawakami B."/>
            <person name="Yamazaki M."/>
            <person name="Watanabe K."/>
            <person name="Kumagai A."/>
            <person name="Itakura S."/>
            <person name="Fukuzumi Y."/>
            <person name="Fujimori Y."/>
            <person name="Komiyama M."/>
            <person name="Tashiro H."/>
            <person name="Tanigami A."/>
            <person name="Fujiwara T."/>
            <person name="Ono T."/>
            <person name="Yamada K."/>
            <person name="Fujii Y."/>
            <person name="Ozaki K."/>
            <person name="Hirao M."/>
            <person name="Ohmori Y."/>
            <person name="Kawabata A."/>
            <person name="Hikiji T."/>
            <person name="Kobatake N."/>
            <person name="Inagaki H."/>
            <person name="Ikema Y."/>
            <person name="Okamoto S."/>
            <person name="Okitani R."/>
            <person name="Kawakami T."/>
            <person name="Noguchi S."/>
            <person name="Itoh T."/>
            <person name="Shigeta K."/>
            <person name="Senba T."/>
            <person name="Matsumura K."/>
            <person name="Nakajima Y."/>
            <person name="Mizuno T."/>
            <person name="Morinaga M."/>
            <person name="Sasaki M."/>
            <person name="Togashi T."/>
            <person name="Oyama M."/>
            <person name="Hata H."/>
            <person name="Watanabe M."/>
            <person name="Komatsu T."/>
            <person name="Mizushima-Sugano J."/>
            <person name="Satoh T."/>
            <person name="Shirai Y."/>
            <person name="Takahashi Y."/>
            <person name="Nakagawa K."/>
            <person name="Okumura K."/>
            <person name="Nagase T."/>
            <person name="Nomura N."/>
            <person name="Kikuchi H."/>
            <person name="Masuho Y."/>
            <person name="Yamashita R."/>
            <person name="Nakai K."/>
            <person name="Yada T."/>
            <person name="Nakamura Y."/>
            <person name="Ohara O."/>
            <person name="Isogai T."/>
            <person name="Sugano S."/>
        </authorList>
    </citation>
    <scope>NUCLEOTIDE SEQUENCE [LARGE SCALE MRNA] (ISOFORM 1)</scope>
    <source>
        <tissue>Trachea</tissue>
    </source>
</reference>
<reference key="5">
    <citation type="submission" date="2005-09" db="EMBL/GenBank/DDBJ databases">
        <authorList>
            <person name="Mural R.J."/>
            <person name="Istrail S."/>
            <person name="Sutton G.G."/>
            <person name="Florea L."/>
            <person name="Halpern A.L."/>
            <person name="Mobarry C.M."/>
            <person name="Lippert R."/>
            <person name="Walenz B."/>
            <person name="Shatkay H."/>
            <person name="Dew I."/>
            <person name="Miller J.R."/>
            <person name="Flanigan M.J."/>
            <person name="Edwards N.J."/>
            <person name="Bolanos R."/>
            <person name="Fasulo D."/>
            <person name="Halldorsson B.V."/>
            <person name="Hannenhalli S."/>
            <person name="Turner R."/>
            <person name="Yooseph S."/>
            <person name="Lu F."/>
            <person name="Nusskern D.R."/>
            <person name="Shue B.C."/>
            <person name="Zheng X.H."/>
            <person name="Zhong F."/>
            <person name="Delcher A.L."/>
            <person name="Huson D.H."/>
            <person name="Kravitz S.A."/>
            <person name="Mouchard L."/>
            <person name="Reinert K."/>
            <person name="Remington K.A."/>
            <person name="Clark A.G."/>
            <person name="Waterman M.S."/>
            <person name="Eichler E.E."/>
            <person name="Adams M.D."/>
            <person name="Hunkapiller M.W."/>
            <person name="Myers E.W."/>
            <person name="Venter J.C."/>
        </authorList>
    </citation>
    <scope>NUCLEOTIDE SEQUENCE [LARGE SCALE GENOMIC DNA]</scope>
</reference>
<reference key="6">
    <citation type="journal article" date="2004" name="Genome Res.">
        <title>The status, quality, and expansion of the NIH full-length cDNA project: the Mammalian Gene Collection (MGC).</title>
        <authorList>
            <consortium name="The MGC Project Team"/>
        </authorList>
    </citation>
    <scope>NUCLEOTIDE SEQUENCE [LARGE SCALE MRNA] (ISOFORM 2)</scope>
    <source>
        <tissue>Ovary</tissue>
        <tissue>Pancreas</tissue>
    </source>
</reference>
<reference key="7">
    <citation type="journal article" date="2003" name="J. Cell Sci.">
        <title>The Crumbs3-Pals1 complex participates in the establishment of polarity in mammalian epithelial cells.</title>
        <authorList>
            <person name="Roh M.H."/>
            <person name="Fan S."/>
            <person name="Liu C.-J."/>
            <person name="Margolis B."/>
        </authorList>
    </citation>
    <scope>FUNCTION</scope>
    <scope>INTERACTION WITH PALS1</scope>
    <scope>SUBCELLULAR LOCATION</scope>
    <scope>MUTAGENESIS OF 117-GLU--ILE-120</scope>
</reference>
<reference key="8">
    <citation type="journal article" date="2004" name="Mol. Biol. Cell">
        <title>CRB3 binds directly to Par6 and regulates the morphogenesis of the tight junctions in mammalian epithelial cells.</title>
        <authorList>
            <person name="Lemmers C."/>
            <person name="Michel D."/>
            <person name="Lane-Guermonprez L."/>
            <person name="Delgrossi M.-H."/>
            <person name="Medina E."/>
            <person name="Arsanto J.-P."/>
            <person name="Le Bivic A."/>
        </authorList>
    </citation>
    <scope>FUNCTION</scope>
    <scope>INTERACTION WITH PARD6A</scope>
    <scope>SUBCELLULAR LOCATION</scope>
    <scope>TISSUE SPECIFICITY</scope>
    <scope>MUTAGENESIS OF 117-GLU--ILE-120</scope>
</reference>
<reference key="9">
    <citation type="journal article" date="2007" name="Exp. Cell Res.">
        <title>FERM protein EPB41L5 is a novel member of the mammalian CRB-MPP5 polarity complex.</title>
        <authorList>
            <person name="Gosens I."/>
            <person name="Sessa A."/>
            <person name="den Hollander A.I."/>
            <person name="Letteboer S.J.F."/>
            <person name="Belloni V."/>
            <person name="Arends M.L."/>
            <person name="Le Bivic A."/>
            <person name="Cremers F.P.M."/>
            <person name="Broccoli V."/>
            <person name="Roepman R."/>
        </authorList>
    </citation>
    <scope>INTERACTION WITH EPB41L5</scope>
    <scope>MUTAGENESIS OF 117-GLU--ILE-120</scope>
</reference>
<reference key="10">
    <citation type="journal article" date="2013" name="J. Cell Biol.">
        <title>The WD40 protein Morg1 facilitates Par6-aPKC binding to Crb3 for apical identity in epithelial cells.</title>
        <authorList>
            <person name="Hayase J."/>
            <person name="Kamakura S."/>
            <person name="Iwakiri Y."/>
            <person name="Yamaguchi Y."/>
            <person name="Izaki T."/>
            <person name="Ito T."/>
            <person name="Sumimoto H."/>
        </authorList>
    </citation>
    <scope>FUNCTION</scope>
    <scope>INTERACTION WITH WDR83</scope>
</reference>
<organism>
    <name type="scientific">Homo sapiens</name>
    <name type="common">Human</name>
    <dbReference type="NCBI Taxonomy" id="9606"/>
    <lineage>
        <taxon>Eukaryota</taxon>
        <taxon>Metazoa</taxon>
        <taxon>Chordata</taxon>
        <taxon>Craniata</taxon>
        <taxon>Vertebrata</taxon>
        <taxon>Euteleostomi</taxon>
        <taxon>Mammalia</taxon>
        <taxon>Eutheria</taxon>
        <taxon>Euarchontoglires</taxon>
        <taxon>Primates</taxon>
        <taxon>Haplorrhini</taxon>
        <taxon>Catarrhini</taxon>
        <taxon>Hominidae</taxon>
        <taxon>Homo</taxon>
    </lineage>
</organism>
<proteinExistence type="evidence at protein level"/>
<comment type="function">
    <text evidence="2 6 7 9">Involved in the establishment of cell polarity in mammalian epithelial cells (PubMed:12771187, PubMed:14718572, PubMed:23439680). Regulates the morphogenesis of tight junctions (PubMed:12771187, PubMed:14718572). Involved in promoting phosphorylation and cytoplasmic retention of transcriptional coactivators YAP1 and WWTR1/TAZ which leads to suppression of TGFB1-dependent transcription of target genes such as CCN2/CTGF, SERPINE1/PAI1, SNAI1/SNAIL1 and SMAD7 (By similarity).</text>
</comment>
<comment type="subunit">
    <text evidence="1 5 6 7 8 9">Component of a complex composed of CRB3, PALS1 and PATJ (By similarity). Interacts (via C-terminus) with PALS1 (via PDZ domain) (PubMed:12527193, PubMed:12771187). Interacts with PARD6A (PubMed:14718572). Interacts (via intracellular domain) with EPB41L5 (PubMed:17920587). Interacts with WDR83 (PubMed:23439680).</text>
</comment>
<comment type="interaction">
    <interactant intactId="EBI-9844372">
        <id>Q9BUF7</id>
    </interactant>
    <interactant intactId="EBI-1047162">
        <id>Q9HCM4</id>
        <label>EPB41L5</label>
    </interactant>
    <organismsDiffer>false</organismsDiffer>
    <experiments>3</experiments>
</comment>
<comment type="interaction">
    <interactant intactId="EBI-9844372">
        <id>Q9BUF7</id>
    </interactant>
    <interactant intactId="EBI-348380">
        <id>P25788</id>
        <label>PSMA3</label>
    </interactant>
    <organismsDiffer>false</organismsDiffer>
    <experiments>3</experiments>
</comment>
<comment type="interaction">
    <interactant intactId="EBI-17233035">
        <id>Q9BUF7-2</id>
    </interactant>
    <interactant intactId="EBI-12109402">
        <id>Q86W74-2</id>
        <label>ANKRD46</label>
    </interactant>
    <organismsDiffer>false</organismsDiffer>
    <experiments>3</experiments>
</comment>
<comment type="interaction">
    <interactant intactId="EBI-17233035">
        <id>Q9BUF7-2</id>
    </interactant>
    <interactant intactId="EBI-747430">
        <id>Q9BXK5</id>
        <label>BCL2L13</label>
    </interactant>
    <organismsDiffer>false</organismsDiffer>
    <experiments>3</experiments>
</comment>
<comment type="interaction">
    <interactant intactId="EBI-17233035">
        <id>Q9BUF7-2</id>
    </interactant>
    <interactant intactId="EBI-749204">
        <id>O15155</id>
        <label>BET1</label>
    </interactant>
    <organismsDiffer>false</organismsDiffer>
    <experiments>3</experiments>
</comment>
<comment type="interaction">
    <interactant intactId="EBI-17233035">
        <id>Q9BUF7-2</id>
    </interactant>
    <interactant intactId="EBI-714482">
        <id>Q9BWH2</id>
        <label>FUNDC2</label>
    </interactant>
    <organismsDiffer>false</organismsDiffer>
    <experiments>3</experiments>
</comment>
<comment type="interaction">
    <interactant intactId="EBI-17233035">
        <id>Q9BUF7-2</id>
    </interactant>
    <interactant intactId="EBI-2806151">
        <id>P09601</id>
        <label>HMOX1</label>
    </interactant>
    <organismsDiffer>false</organismsDiffer>
    <experiments>3</experiments>
</comment>
<comment type="interaction">
    <interactant intactId="EBI-17233035">
        <id>Q9BUF7-2</id>
    </interactant>
    <interactant intactId="EBI-712096">
        <id>P30519</id>
        <label>HMOX2</label>
    </interactant>
    <organismsDiffer>false</organismsDiffer>
    <experiments>3</experiments>
</comment>
<comment type="interaction">
    <interactant intactId="EBI-17233035">
        <id>Q9BUF7-2</id>
    </interactant>
    <interactant intactId="EBI-1246131">
        <id>O95167</id>
        <label>NDUFA3</label>
    </interactant>
    <organismsDiffer>false</organismsDiffer>
    <experiments>3</experiments>
</comment>
<comment type="interaction">
    <interactant intactId="EBI-17233035">
        <id>Q9BUF7-2</id>
    </interactant>
    <interactant intactId="EBI-3919291">
        <id>Q9Y342</id>
        <label>PLLP</label>
    </interactant>
    <organismsDiffer>false</organismsDiffer>
    <experiments>3</experiments>
</comment>
<comment type="interaction">
    <interactant intactId="EBI-17233035">
        <id>Q9BUF7-2</id>
    </interactant>
    <interactant intactId="EBI-608347">
        <id>Q04941</id>
        <label>PLP2</label>
    </interactant>
    <organismsDiffer>false</organismsDiffer>
    <experiments>3</experiments>
</comment>
<comment type="interaction">
    <interactant intactId="EBI-17233035">
        <id>Q9BUF7-2</id>
    </interactant>
    <interactant intactId="EBI-998468">
        <id>Q9NZ42</id>
        <label>PSENEN</label>
    </interactant>
    <organismsDiffer>false</organismsDiffer>
    <experiments>3</experiments>
</comment>
<comment type="interaction">
    <interactant intactId="EBI-17233035">
        <id>Q9BUF7-2</id>
    </interactant>
    <interactant intactId="EBI-712367">
        <id>Q9UI14</id>
        <label>RABAC1</label>
    </interactant>
    <organismsDiffer>false</organismsDiffer>
    <experiments>3</experiments>
</comment>
<comment type="interaction">
    <interactant intactId="EBI-17233035">
        <id>Q9BUF7-2</id>
    </interactant>
    <interactant intactId="EBI-2115181">
        <id>O75920</id>
        <label>SERF1B</label>
    </interactant>
    <organismsDiffer>false</organismsDiffer>
    <experiments>3</experiments>
</comment>
<comment type="interaction">
    <interactant intactId="EBI-17233035">
        <id>Q9BUF7-2</id>
    </interactant>
    <interactant intactId="EBI-10329948">
        <id>Q9Y6X1</id>
        <label>SERP1</label>
    </interactant>
    <organismsDiffer>false</organismsDiffer>
    <experiments>3</experiments>
</comment>
<comment type="interaction">
    <interactant intactId="EBI-17233035">
        <id>Q9BUF7-2</id>
    </interactant>
    <interactant intactId="EBI-2823239">
        <id>Q9NUM3</id>
        <label>SLC39A9</label>
    </interactant>
    <organismsDiffer>false</organismsDiffer>
    <experiments>3</experiments>
</comment>
<comment type="interaction">
    <interactant intactId="EBI-17233035">
        <id>Q9BUF7-2</id>
    </interactant>
    <interactant intactId="EBI-714206">
        <id>Q13190</id>
        <label>STX5</label>
    </interactant>
    <organismsDiffer>false</organismsDiffer>
    <experiments>3</experiments>
</comment>
<comment type="interaction">
    <interactant intactId="EBI-17233035">
        <id>Q9BUF7-2</id>
    </interactant>
    <interactant intactId="EBI-2877718">
        <id>Q9NZ01</id>
        <label>TECR</label>
    </interactant>
    <organismsDiffer>false</organismsDiffer>
    <experiments>3</experiments>
</comment>
<comment type="interaction">
    <interactant intactId="EBI-17233035">
        <id>Q9BUF7-2</id>
    </interactant>
    <interactant intactId="EBI-347385">
        <id>Q9H0R3</id>
        <label>TMEM222</label>
    </interactant>
    <organismsDiffer>false</organismsDiffer>
    <experiments>3</experiments>
</comment>
<comment type="interaction">
    <interactant intactId="EBI-17233035">
        <id>Q9BUF7-2</id>
    </interactant>
    <interactant intactId="EBI-16746122">
        <id>Q9NSU2-1</id>
        <label>TREX1</label>
    </interactant>
    <organismsDiffer>false</organismsDiffer>
    <experiments>3</experiments>
</comment>
<comment type="interaction">
    <interactant intactId="EBI-17233035">
        <id>Q9BUF7-2</id>
    </interactant>
    <interactant intactId="EBI-2819725">
        <id>Q9Y5Z9</id>
        <label>UBIAD1</label>
    </interactant>
    <organismsDiffer>false</organismsDiffer>
    <experiments>3</experiments>
</comment>
<comment type="interaction">
    <interactant intactId="EBI-17233035">
        <id>Q9BUF7-2</id>
    </interactant>
    <interactant intactId="EBI-12097582">
        <id>P23763-3</id>
        <label>VAMP1</label>
    </interactant>
    <organismsDiffer>false</organismsDiffer>
    <experiments>3</experiments>
</comment>
<comment type="interaction">
    <interactant intactId="EBI-17233035">
        <id>Q9BUF7-2</id>
    </interactant>
    <interactant intactId="EBI-723716">
        <id>Q9UEU0</id>
        <label>VTI1B</label>
    </interactant>
    <organismsDiffer>false</organismsDiffer>
    <experiments>3</experiments>
</comment>
<comment type="interaction">
    <interactant intactId="EBI-17233035">
        <id>Q9BUF7-2</id>
    </interactant>
    <interactant intactId="EBI-751210">
        <id>Q96EC8</id>
        <label>YIPF6</label>
    </interactant>
    <organismsDiffer>false</organismsDiffer>
    <experiments>3</experiments>
</comment>
<comment type="interaction">
    <interactant intactId="EBI-25611611">
        <id>PRO_0000021005</id>
    </interactant>
    <interactant intactId="EBI-8231026">
        <id>Q8N3R9-1</id>
        <label>PALS1</label>
    </interactant>
    <organismsDiffer>false</organismsDiffer>
    <experiments>3</experiments>
</comment>
<comment type="subcellular location">
    <subcellularLocation>
        <location evidence="5 6 7">Apical cell membrane</location>
        <topology evidence="3">Single-pass type I membrane protein</topology>
    </subcellularLocation>
    <subcellularLocation>
        <location evidence="5">Cell junction</location>
        <location evidence="5">Tight junction</location>
    </subcellularLocation>
    <text evidence="7">Localizes primarily to the apical membrane with a small fraction in the upper part of tight junctions of epithelial cells.</text>
</comment>
<comment type="alternative products">
    <event type="alternative splicing"/>
    <isoform>
        <id>Q9BUF7-1</id>
        <name>1</name>
        <name>A</name>
        <sequence type="displayed"/>
    </isoform>
    <isoform>
        <id>Q9BUF7-2</id>
        <name>2</name>
        <name>B</name>
        <sequence type="described" ref="VSP_013989"/>
    </isoform>
</comment>
<comment type="tissue specificity">
    <text evidence="5 7">Preferentially expressed in epithelial tissues (PubMed:14718572). Expressed at high levels in lung, kidney, and colon (PubMed:12527193, PubMed:14718572). Expressed at high levels in retina, colon and mammary glands (PubMed:12527193). Moderately expressed in liver, spleen, pancreas and prostate (PubMed:12527193). Moderately to weakly expressed in the placenta (PubMed:12527193, PubMed:14718572). Weakly expressed in skeletal muscle and small intestine (PubMed:14718572).</text>
</comment>
<comment type="domain">
    <text evidence="6 7">The PDZ-binding motif is involved in the interactions with PARD6A and PALS1.</text>
</comment>
<gene>
    <name evidence="12" type="primary">CRB3</name>
    <name type="ORF">UNQ588/PRO1158</name>
</gene>